<organism>
    <name type="scientific">Arabidopsis thaliana</name>
    <name type="common">Mouse-ear cress</name>
    <dbReference type="NCBI Taxonomy" id="3702"/>
    <lineage>
        <taxon>Eukaryota</taxon>
        <taxon>Viridiplantae</taxon>
        <taxon>Streptophyta</taxon>
        <taxon>Embryophyta</taxon>
        <taxon>Tracheophyta</taxon>
        <taxon>Spermatophyta</taxon>
        <taxon>Magnoliopsida</taxon>
        <taxon>eudicotyledons</taxon>
        <taxon>Gunneridae</taxon>
        <taxon>Pentapetalae</taxon>
        <taxon>rosids</taxon>
        <taxon>malvids</taxon>
        <taxon>Brassicales</taxon>
        <taxon>Brassicaceae</taxon>
        <taxon>Camelineae</taxon>
        <taxon>Arabidopsis</taxon>
    </lineage>
</organism>
<comment type="subcellular location">
    <subcellularLocation>
        <location evidence="1">Secreted</location>
    </subcellularLocation>
</comment>
<comment type="similarity">
    <text evidence="3">Belongs to the DEFL family.</text>
</comment>
<comment type="caution">
    <text evidence="3">Could be the product of a pseudogene. Lacks 1 of the 4 disulfide bonds, which are conserved features of the family.</text>
</comment>
<sequence length="77" mass="8668">MKNSSIMFVLIVVFLISSSENQKMVGEAKQCKTGWACFGEDACKEKCMAKYKGVGTVTYFPFPPETIIIYCECLYDC</sequence>
<evidence type="ECO:0000250" key="1"/>
<evidence type="ECO:0000255" key="2"/>
<evidence type="ECO:0000305" key="3"/>
<dbReference type="EMBL" id="AB025608">
    <property type="status" value="NOT_ANNOTATED_CDS"/>
    <property type="molecule type" value="Genomic_DNA"/>
</dbReference>
<dbReference type="EMBL" id="CP002686">
    <property type="protein sequence ID" value="AEE76726.1"/>
    <property type="molecule type" value="Genomic_DNA"/>
</dbReference>
<dbReference type="RefSeq" id="NP_001030745.1">
    <property type="nucleotide sequence ID" value="NM_001035668.1"/>
</dbReference>
<dbReference type="SMR" id="P82757"/>
<dbReference type="STRING" id="3702.P82757"/>
<dbReference type="PaxDb" id="3702-AT3G23165.1"/>
<dbReference type="EnsemblPlants" id="AT3G23165.1">
    <property type="protein sequence ID" value="AT3G23165.1"/>
    <property type="gene ID" value="AT3G23165"/>
</dbReference>
<dbReference type="GeneID" id="3768906"/>
<dbReference type="Gramene" id="AT3G23165.1">
    <property type="protein sequence ID" value="AT3G23165.1"/>
    <property type="gene ID" value="AT3G23165"/>
</dbReference>
<dbReference type="KEGG" id="ath:AT3G23165"/>
<dbReference type="Araport" id="AT3G23165"/>
<dbReference type="TAIR" id="AT3G23165">
    <property type="gene designation" value="LCR42"/>
</dbReference>
<dbReference type="HOGENOM" id="CLU_199292_0_0_1"/>
<dbReference type="InParanoid" id="P82757"/>
<dbReference type="OMA" id="GEDACKE"/>
<dbReference type="OrthoDB" id="10279656at2759"/>
<dbReference type="PhylomeDB" id="P82757"/>
<dbReference type="Proteomes" id="UP000006548">
    <property type="component" value="Chromosome 3"/>
</dbReference>
<dbReference type="ExpressionAtlas" id="P82757">
    <property type="expression patterns" value="baseline and differential"/>
</dbReference>
<dbReference type="GO" id="GO:0005576">
    <property type="term" value="C:extracellular region"/>
    <property type="evidence" value="ECO:0007669"/>
    <property type="project" value="UniProtKB-SubCell"/>
</dbReference>
<dbReference type="GO" id="GO:0050832">
    <property type="term" value="P:defense response to fungus"/>
    <property type="evidence" value="ECO:0007669"/>
    <property type="project" value="UniProtKB-KW"/>
</dbReference>
<dbReference type="GO" id="GO:0031640">
    <property type="term" value="P:killing of cells of another organism"/>
    <property type="evidence" value="ECO:0007669"/>
    <property type="project" value="UniProtKB-KW"/>
</dbReference>
<protein>
    <recommendedName>
        <fullName>Putative defensin-like protein 187</fullName>
    </recommendedName>
    <alternativeName>
        <fullName>Putative low-molecular-weight cysteine-rich protein 42</fullName>
        <shortName>Protein LCR42</shortName>
    </alternativeName>
</protein>
<accession>P82757</accession>
<reference key="1">
    <citation type="journal article" date="2000" name="DNA Res.">
        <title>Structural analysis of Arabidopsis thaliana chromosome 3. I. Sequence features of the regions of 4,504,864 bp covered by sixty P1 and TAC clones.</title>
        <authorList>
            <person name="Sato S."/>
            <person name="Nakamura Y."/>
            <person name="Kaneko T."/>
            <person name="Katoh T."/>
            <person name="Asamizu E."/>
            <person name="Tabata S."/>
        </authorList>
    </citation>
    <scope>NUCLEOTIDE SEQUENCE [LARGE SCALE GENOMIC DNA]</scope>
    <source>
        <strain>cv. Columbia</strain>
    </source>
</reference>
<reference key="2">
    <citation type="journal article" date="2017" name="Plant J.">
        <title>Araport11: a complete reannotation of the Arabidopsis thaliana reference genome.</title>
        <authorList>
            <person name="Cheng C.Y."/>
            <person name="Krishnakumar V."/>
            <person name="Chan A.P."/>
            <person name="Thibaud-Nissen F."/>
            <person name="Schobel S."/>
            <person name="Town C.D."/>
        </authorList>
    </citation>
    <scope>GENOME REANNOTATION</scope>
    <source>
        <strain>cv. Columbia</strain>
    </source>
</reference>
<reference key="3">
    <citation type="journal article" date="2001" name="Plant Mol. Biol.">
        <title>Two large Arabidopsis thaliana gene families are homologous to the Brassica gene superfamily that encodes pollen coat proteins and the male component of the self-incompatibility response.</title>
        <authorList>
            <person name="Vanoosthuyse V."/>
            <person name="Miege C."/>
            <person name="Dumas C."/>
            <person name="Cock J.M."/>
        </authorList>
    </citation>
    <scope>IDENTIFICATION</scope>
</reference>
<reference key="4">
    <citation type="journal article" date="2005" name="Plant Physiol.">
        <title>Genome organization of more than 300 defensin-like genes in Arabidopsis.</title>
        <authorList>
            <person name="Silverstein K.A.T."/>
            <person name="Graham M.A."/>
            <person name="Paape T.D."/>
            <person name="VandenBosch K.A."/>
        </authorList>
    </citation>
    <scope>GENE FAMILY</scope>
</reference>
<name>DF187_ARATH</name>
<feature type="signal peptide" evidence="2">
    <location>
        <begin position="1"/>
        <end position="19"/>
    </location>
</feature>
<feature type="chain" id="PRO_0000017281" description="Putative defensin-like protein 187">
    <location>
        <begin position="20"/>
        <end position="77"/>
    </location>
</feature>
<feature type="disulfide bond" evidence="1">
    <location>
        <begin position="31"/>
        <end position="77"/>
    </location>
</feature>
<feature type="disulfide bond" evidence="1">
    <location>
        <begin position="43"/>
        <end position="71"/>
    </location>
</feature>
<feature type="disulfide bond" evidence="1">
    <location>
        <begin position="47"/>
        <end position="73"/>
    </location>
</feature>
<proteinExistence type="uncertain"/>
<keyword id="KW-0929">Antimicrobial</keyword>
<keyword id="KW-1015">Disulfide bond</keyword>
<keyword id="KW-0295">Fungicide</keyword>
<keyword id="KW-0611">Plant defense</keyword>
<keyword id="KW-1185">Reference proteome</keyword>
<keyword id="KW-0964">Secreted</keyword>
<keyword id="KW-0732">Signal</keyword>
<gene>
    <name type="primary">LCR42</name>
    <name type="ordered locus">At3g23165</name>
    <name type="ORF">K14B15</name>
</gene>